<evidence type="ECO:0000250" key="1"/>
<evidence type="ECO:0000250" key="2">
    <source>
        <dbReference type="UniProtKB" id="P11598"/>
    </source>
</evidence>
<evidence type="ECO:0000250" key="3">
    <source>
        <dbReference type="UniProtKB" id="P30101"/>
    </source>
</evidence>
<evidence type="ECO:0000255" key="4"/>
<evidence type="ECO:0000255" key="5">
    <source>
        <dbReference type="PROSITE-ProRule" id="PRU00691"/>
    </source>
</evidence>
<evidence type="ECO:0000256" key="6">
    <source>
        <dbReference type="SAM" id="MobiDB-lite"/>
    </source>
</evidence>
<evidence type="ECO:0000305" key="7"/>
<feature type="signal peptide" evidence="4">
    <location>
        <begin position="1"/>
        <end position="24"/>
    </location>
</feature>
<feature type="chain" id="PRO_5000088911" description="Protein disulfide-isomerase A3">
    <location>
        <begin position="25"/>
        <end position="505"/>
    </location>
</feature>
<feature type="domain" description="Thioredoxin 1" evidence="5">
    <location>
        <begin position="25"/>
        <end position="131"/>
    </location>
</feature>
<feature type="domain" description="Thioredoxin 2" evidence="5">
    <location>
        <begin position="341"/>
        <end position="483"/>
    </location>
</feature>
<feature type="region of interest" description="Disordered" evidence="6">
    <location>
        <begin position="486"/>
        <end position="505"/>
    </location>
</feature>
<feature type="short sequence motif" description="Prevents secretion from ER" evidence="2">
    <location>
        <begin position="502"/>
        <end position="505"/>
    </location>
</feature>
<feature type="compositionally biased region" description="Basic residues" evidence="6">
    <location>
        <begin position="495"/>
        <end position="505"/>
    </location>
</feature>
<feature type="active site" description="Nucleophile" evidence="3">
    <location>
        <position position="55"/>
    </location>
</feature>
<feature type="active site" description="Nucleophile" evidence="3">
    <location>
        <position position="58"/>
    </location>
</feature>
<feature type="active site" description="Nucleophile" evidence="3">
    <location>
        <position position="404"/>
    </location>
</feature>
<feature type="active site" description="Nucleophile" evidence="3">
    <location>
        <position position="407"/>
    </location>
</feature>
<feature type="site" description="Contributes to redox potential value" evidence="1">
    <location>
        <position position="56"/>
    </location>
</feature>
<feature type="site" description="Contributes to redox potential value" evidence="1">
    <location>
        <position position="57"/>
    </location>
</feature>
<feature type="site" description="Lowers pKa of C-terminal Cys of first active site" evidence="1">
    <location>
        <position position="117"/>
    </location>
</feature>
<feature type="site" description="Contributes to redox potential value" evidence="1">
    <location>
        <position position="405"/>
    </location>
</feature>
<feature type="site" description="Contributes to redox potential value" evidence="1">
    <location>
        <position position="406"/>
    </location>
</feature>
<feature type="site" description="Lowers pKa of C-terminal Cys of second active site" evidence="1">
    <location>
        <position position="469"/>
    </location>
</feature>
<feature type="disulfide bond" description="Redox-active; reversible" evidence="3 5">
    <location>
        <begin position="55"/>
        <end position="58"/>
    </location>
</feature>
<feature type="disulfide bond" description="Interchain (with TAPBP); in linked form; reversible" evidence="3">
    <location>
        <position position="55"/>
    </location>
</feature>
<feature type="disulfide bond" evidence="3">
    <location>
        <begin position="83"/>
        <end position="90"/>
    </location>
</feature>
<feature type="disulfide bond" description="Redox-active" evidence="3 5">
    <location>
        <begin position="404"/>
        <end position="407"/>
    </location>
</feature>
<reference key="1">
    <citation type="submission" date="2002-06" db="EMBL/GenBank/DDBJ databases">
        <title>The amino-acid sequence of chicken homologue of ERp57.</title>
        <authorList>
            <person name="Gao B."/>
        </authorList>
    </citation>
    <scope>NUCLEOTIDE SEQUENCE [MRNA]</scope>
    <source>
        <strain>White leghorn</strain>
        <tissue>Liver</tissue>
    </source>
</reference>
<gene>
    <name type="primary">PDIA3</name>
    <name type="synonym">ERP57</name>
    <name type="synonym">GRP58</name>
</gene>
<name>PDIA3_CHICK</name>
<keyword id="KW-1015">Disulfide bond</keyword>
<keyword id="KW-0256">Endoplasmic reticulum</keyword>
<keyword id="KW-0413">Isomerase</keyword>
<keyword id="KW-0676">Redox-active center</keyword>
<keyword id="KW-1185">Reference proteome</keyword>
<keyword id="KW-0677">Repeat</keyword>
<keyword id="KW-0732">Signal</keyword>
<organism>
    <name type="scientific">Gallus gallus</name>
    <name type="common">Chicken</name>
    <dbReference type="NCBI Taxonomy" id="9031"/>
    <lineage>
        <taxon>Eukaryota</taxon>
        <taxon>Metazoa</taxon>
        <taxon>Chordata</taxon>
        <taxon>Craniata</taxon>
        <taxon>Vertebrata</taxon>
        <taxon>Euteleostomi</taxon>
        <taxon>Archelosauria</taxon>
        <taxon>Archosauria</taxon>
        <taxon>Dinosauria</taxon>
        <taxon>Saurischia</taxon>
        <taxon>Theropoda</taxon>
        <taxon>Coelurosauria</taxon>
        <taxon>Aves</taxon>
        <taxon>Neognathae</taxon>
        <taxon>Galloanserae</taxon>
        <taxon>Galliformes</taxon>
        <taxon>Phasianidae</taxon>
        <taxon>Phasianinae</taxon>
        <taxon>Gallus</taxon>
    </lineage>
</organism>
<sequence>MSVPRPSRAALLLLVPLLALSAGASDVVELSDADFESGLAERPGLVLVEFFAPWCGHCKRLAPEYEAAATRLKGIVPLVKVDCTANSNTCNKYGVSGYPTLKIFRDGEESGTYDGPRTADGIVSHLKKQAGPASVALSSVADFEKFIGDKDASVVGFFRDASGDAYSEFMKAANNLRDNYRFAHTSEEQLVQKYEEDGEGVVLYRPSRLANKFEDSTVKYTEDKITSAKIKKFIQENIFGICPHMTEDNKDLIQGKDLLVAYYDVDYEKNAKGSNYWRNRVMMIAKKFLDAGHKLSFAVASRKTFGHELSEFGLDNSVGEAPVVAIRTAKGDKFVMQEEFSRDGKALERFLQDYFDGNLKKYLKSEPVPENNDGPVKVVVAENFDEIVNAEDKDVLIEFYAPWCGHCKNLEPKYKELGEKLSKDPNIVIAKMDATANDVPSPYEVRGFPTIYFAPAGKKQSPKKYEGGREVSDFISYLKREATSTPVLQEEDKAKKSKKKAKEDL</sequence>
<dbReference type="EC" id="5.3.4.1" evidence="3"/>
<dbReference type="EMBL" id="AY122886">
    <property type="protein sequence ID" value="AAM82759.1"/>
    <property type="molecule type" value="mRNA"/>
</dbReference>
<dbReference type="RefSeq" id="NP_989441.1">
    <property type="nucleotide sequence ID" value="NM_204110.4"/>
</dbReference>
<dbReference type="SMR" id="Q8JG64"/>
<dbReference type="BioGRID" id="674949">
    <property type="interactions" value="1"/>
</dbReference>
<dbReference type="FunCoup" id="Q8JG64">
    <property type="interactions" value="2308"/>
</dbReference>
<dbReference type="STRING" id="9031.ENSGALP00000013574"/>
<dbReference type="PaxDb" id="9031-ENSGALP00000013574"/>
<dbReference type="Ensembl" id="ENSGALT00010000040.1">
    <property type="protein sequence ID" value="ENSGALP00010000016.1"/>
    <property type="gene ID" value="ENSGALG00010000039.1"/>
</dbReference>
<dbReference type="GeneID" id="373899"/>
<dbReference type="KEGG" id="gga:373899"/>
<dbReference type="CTD" id="2923"/>
<dbReference type="VEuPathDB" id="HostDB:geneid_373899"/>
<dbReference type="eggNOG" id="KOG0190">
    <property type="taxonomic scope" value="Eukaryota"/>
</dbReference>
<dbReference type="GeneTree" id="ENSGT00940000155425"/>
<dbReference type="HOGENOM" id="CLU_025879_6_0_1"/>
<dbReference type="InParanoid" id="Q8JG64"/>
<dbReference type="OMA" id="QLANKFE"/>
<dbReference type="OrthoDB" id="427280at2759"/>
<dbReference type="PhylomeDB" id="Q8JG64"/>
<dbReference type="TreeFam" id="TF106382"/>
<dbReference type="Reactome" id="R-GGA-1236974">
    <property type="pathway name" value="ER-Phagosome pathway"/>
</dbReference>
<dbReference type="Reactome" id="R-GGA-901042">
    <property type="pathway name" value="Calnexin/calreticulin cycle"/>
</dbReference>
<dbReference type="Reactome" id="R-GGA-983170">
    <property type="pathway name" value="Antigen Presentation: Folding, assembly and peptide loading of class I MHC"/>
</dbReference>
<dbReference type="PRO" id="PR:Q8JG64"/>
<dbReference type="Proteomes" id="UP000000539">
    <property type="component" value="Chromosome 10"/>
</dbReference>
<dbReference type="Bgee" id="ENSGALG00000008348">
    <property type="expression patterns" value="Expressed in spermatocyte and 13 other cell types or tissues"/>
</dbReference>
<dbReference type="GO" id="GO:0009986">
    <property type="term" value="C:cell surface"/>
    <property type="evidence" value="ECO:0000318"/>
    <property type="project" value="GO_Central"/>
</dbReference>
<dbReference type="GO" id="GO:0005783">
    <property type="term" value="C:endoplasmic reticulum"/>
    <property type="evidence" value="ECO:0000318"/>
    <property type="project" value="GO_Central"/>
</dbReference>
<dbReference type="GO" id="GO:0005788">
    <property type="term" value="C:endoplasmic reticulum lumen"/>
    <property type="evidence" value="ECO:0007669"/>
    <property type="project" value="UniProtKB-SubCell"/>
</dbReference>
<dbReference type="GO" id="GO:0005615">
    <property type="term" value="C:extracellular space"/>
    <property type="evidence" value="ECO:0007669"/>
    <property type="project" value="Ensembl"/>
</dbReference>
<dbReference type="GO" id="GO:0042470">
    <property type="term" value="C:melanosome"/>
    <property type="evidence" value="ECO:0007669"/>
    <property type="project" value="UniProtKB-SubCell"/>
</dbReference>
<dbReference type="GO" id="GO:0061779">
    <property type="term" value="C:Tapasin-ERp57 complex"/>
    <property type="evidence" value="ECO:0007669"/>
    <property type="project" value="Ensembl"/>
</dbReference>
<dbReference type="GO" id="GO:0042802">
    <property type="term" value="F:identical protein binding"/>
    <property type="evidence" value="ECO:0007669"/>
    <property type="project" value="Ensembl"/>
</dbReference>
<dbReference type="GO" id="GO:0106222">
    <property type="term" value="F:lncRNA binding"/>
    <property type="evidence" value="ECO:0007669"/>
    <property type="project" value="Ensembl"/>
</dbReference>
<dbReference type="GO" id="GO:0003756">
    <property type="term" value="F:protein disulfide isomerase activity"/>
    <property type="evidence" value="ECO:0000318"/>
    <property type="project" value="GO_Central"/>
</dbReference>
<dbReference type="GO" id="GO:0015035">
    <property type="term" value="F:protein-disulfide reductase activity"/>
    <property type="evidence" value="ECO:0007669"/>
    <property type="project" value="Ensembl"/>
</dbReference>
<dbReference type="GO" id="GO:0098761">
    <property type="term" value="P:cellular response to interleukin-7"/>
    <property type="evidence" value="ECO:0007669"/>
    <property type="project" value="Ensembl"/>
</dbReference>
<dbReference type="GO" id="GO:0097191">
    <property type="term" value="P:extrinsic apoptotic signaling pathway"/>
    <property type="evidence" value="ECO:0007669"/>
    <property type="project" value="Ensembl"/>
</dbReference>
<dbReference type="GO" id="GO:0002502">
    <property type="term" value="P:peptide antigen assembly with MHC class I protein complex"/>
    <property type="evidence" value="ECO:0007669"/>
    <property type="project" value="Ensembl"/>
</dbReference>
<dbReference type="GO" id="GO:0070527">
    <property type="term" value="P:platelet aggregation"/>
    <property type="evidence" value="ECO:0007669"/>
    <property type="project" value="Ensembl"/>
</dbReference>
<dbReference type="GO" id="GO:2001238">
    <property type="term" value="P:positive regulation of extrinsic apoptotic signaling pathway"/>
    <property type="evidence" value="ECO:0007669"/>
    <property type="project" value="Ensembl"/>
</dbReference>
<dbReference type="GO" id="GO:0006457">
    <property type="term" value="P:protein folding"/>
    <property type="evidence" value="ECO:0000318"/>
    <property type="project" value="GO_Central"/>
</dbReference>
<dbReference type="GO" id="GO:0034976">
    <property type="term" value="P:response to endoplasmic reticulum stress"/>
    <property type="evidence" value="ECO:0000318"/>
    <property type="project" value="GO_Central"/>
</dbReference>
<dbReference type="CDD" id="cd02995">
    <property type="entry name" value="PDI_a_PDI_a'_C"/>
    <property type="match status" value="1"/>
</dbReference>
<dbReference type="CDD" id="cd03073">
    <property type="entry name" value="PDI_b'_ERp72_ERp57"/>
    <property type="match status" value="1"/>
</dbReference>
<dbReference type="CDD" id="cd03069">
    <property type="entry name" value="PDI_b_ERp57"/>
    <property type="match status" value="1"/>
</dbReference>
<dbReference type="FunFam" id="3.40.30.10:FF:000045">
    <property type="entry name" value="Disulfide-isomerase A3"/>
    <property type="match status" value="1"/>
</dbReference>
<dbReference type="FunFam" id="3.40.30.10:FF:000054">
    <property type="entry name" value="Disulfide-isomerase A3"/>
    <property type="match status" value="1"/>
</dbReference>
<dbReference type="FunFam" id="3.40.30.10:FF:000077">
    <property type="entry name" value="Protein disulfide-isomerase"/>
    <property type="match status" value="1"/>
</dbReference>
<dbReference type="FunFam" id="3.40.30.10:FF:000017">
    <property type="entry name" value="Protein disulfide-isomerase A4"/>
    <property type="match status" value="1"/>
</dbReference>
<dbReference type="Gene3D" id="3.40.30.10">
    <property type="entry name" value="Glutaredoxin"/>
    <property type="match status" value="4"/>
</dbReference>
<dbReference type="InterPro" id="IPR005788">
    <property type="entry name" value="PDI_thioredoxin-like_dom"/>
</dbReference>
<dbReference type="InterPro" id="IPR041868">
    <property type="entry name" value="PDIA3_PDI_b"/>
</dbReference>
<dbReference type="InterPro" id="IPR005792">
    <property type="entry name" value="Prot_disulphide_isomerase"/>
</dbReference>
<dbReference type="InterPro" id="IPR036249">
    <property type="entry name" value="Thioredoxin-like_sf"/>
</dbReference>
<dbReference type="InterPro" id="IPR017937">
    <property type="entry name" value="Thioredoxin_CS"/>
</dbReference>
<dbReference type="InterPro" id="IPR013766">
    <property type="entry name" value="Thioredoxin_domain"/>
</dbReference>
<dbReference type="NCBIfam" id="TIGR01130">
    <property type="entry name" value="ER_PDI_fam"/>
    <property type="match status" value="1"/>
</dbReference>
<dbReference type="NCBIfam" id="TIGR01126">
    <property type="entry name" value="pdi_dom"/>
    <property type="match status" value="1"/>
</dbReference>
<dbReference type="PANTHER" id="PTHR18929">
    <property type="entry name" value="PROTEIN DISULFIDE ISOMERASE"/>
    <property type="match status" value="1"/>
</dbReference>
<dbReference type="PANTHER" id="PTHR18929:SF132">
    <property type="entry name" value="PROTEIN DISULFIDE-ISOMERASE A3"/>
    <property type="match status" value="1"/>
</dbReference>
<dbReference type="Pfam" id="PF00085">
    <property type="entry name" value="Thioredoxin"/>
    <property type="match status" value="2"/>
</dbReference>
<dbReference type="Pfam" id="PF13848">
    <property type="entry name" value="Thioredoxin_6"/>
    <property type="match status" value="1"/>
</dbReference>
<dbReference type="PRINTS" id="PR00421">
    <property type="entry name" value="THIOREDOXIN"/>
</dbReference>
<dbReference type="SUPFAM" id="SSF52833">
    <property type="entry name" value="Thioredoxin-like"/>
    <property type="match status" value="4"/>
</dbReference>
<dbReference type="PROSITE" id="PS00194">
    <property type="entry name" value="THIOREDOXIN_1"/>
    <property type="match status" value="2"/>
</dbReference>
<dbReference type="PROSITE" id="PS51352">
    <property type="entry name" value="THIOREDOXIN_2"/>
    <property type="match status" value="2"/>
</dbReference>
<accession>Q8JG64</accession>
<comment type="function">
    <text evidence="3">Protein disulfide isomerase that catalyzes the formation, isomerization, and reduction or oxidation of disulfide bonds in client proteins and functions as a protein folding chaperone.</text>
</comment>
<comment type="catalytic activity">
    <reaction evidence="3">
        <text>Catalyzes the rearrangement of -S-S- bonds in proteins.</text>
        <dbReference type="EC" id="5.3.4.1"/>
    </reaction>
</comment>
<comment type="subcellular location">
    <subcellularLocation>
        <location evidence="3">Endoplasmic reticulum</location>
    </subcellularLocation>
    <subcellularLocation>
        <location evidence="2">Endoplasmic reticulum lumen</location>
    </subcellularLocation>
    <subcellularLocation>
        <location evidence="3">Melanosome</location>
    </subcellularLocation>
</comment>
<comment type="similarity">
    <text evidence="7">Belongs to the protein disulfide isomerase family.</text>
</comment>
<protein>
    <recommendedName>
        <fullName>Protein disulfide-isomerase A3</fullName>
        <ecNumber evidence="3">5.3.4.1</ecNumber>
    </recommendedName>
    <alternativeName>
        <fullName>Endoplasmic reticulum resident protein 57</fullName>
        <shortName>ER protein 57</shortName>
        <shortName>ERp57</shortName>
    </alternativeName>
    <alternativeName>
        <fullName>Glucose-regulated thiol oxidoreductase 58 kDa protein</fullName>
    </alternativeName>
</protein>
<proteinExistence type="evidence at transcript level"/>